<sequence length="896" mass="101155">MSTVNHHCLLNFPHIPPSIPPNHRPKLLSSLSLYRKPERLFALSASLSLSPATIHECSSSSSSSSSSFDKEETEDIESVIDGFFYLLRLSAQYHDVEVTKAVHASFLKLREEKTRLGNALISTYLKLGFPREAILVFVSLSSPTVVSYTALISGFSRLNLEIEALKVFFRMRKAGLVQPNEYTFVAILTACVRVSRFSLGIQIHGLIVKSGFLNSVFVSNSLMSLYDKDSGSSCDDVLKLFDEIPQRDVASWNTVVSSLVKEGKSHKAFDLFYEMNRVEGFGVDSFTLSTLLSSCTDSSVLLRGRELHGRAIRIGLMQELSVNNALIGFYSKFWDMKKVESLYEMMMAQDAVTFTEMITAYMSFGMVDSAVEIFANVTEKNTITYNALMAGFCRNGHGLKALKLFTDMLQRGVELTDFSLTSAVDACGLVSEKKVSEQIHGFCIKFGTAFNPCIQTALLDMCTRCERMADAEEMFDQWPSNLDSSKATTSIIGGYARNGLPDKAVSLFHRTLCEQKLFLDEVSLTLILAVCGTLGFREMGYQIHCYALKAGYFSDISLGNSLISMYAKCCDSDDAIKIFNTMREHDVISWNSLISCYILQRNGDEALALWSRMNEKEIKPDIITLTLVISAFRYTESNKLSSCRDLFLSMKTIYDIEPTTEHYTAFVRVLGHWGLLEEAEDTINSMPVQPEVSVLRALLDSCRIHSNTSVAKRVAKLILSTKPETPSEYILKSNIYSASGFWHRSEMIREEMRERGYRKHPAKSWIIHENKIHSFHARDTSHPQEKDIYRGLEILIMECLKVGYEPNTEYVLQEVDEFMKKSFLFHHSAKLAVTYGILSSNTRGKPVRVMKNVMLCGDCHEFFKYISVVVKREIVLRDSSGFHHFVNGKCSCRDLW</sequence>
<organism>
    <name type="scientific">Arabidopsis thaliana</name>
    <name type="common">Mouse-ear cress</name>
    <dbReference type="NCBI Taxonomy" id="3702"/>
    <lineage>
        <taxon>Eukaryota</taxon>
        <taxon>Viridiplantae</taxon>
        <taxon>Streptophyta</taxon>
        <taxon>Embryophyta</taxon>
        <taxon>Tracheophyta</taxon>
        <taxon>Spermatophyta</taxon>
        <taxon>Magnoliopsida</taxon>
        <taxon>eudicotyledons</taxon>
        <taxon>Gunneridae</taxon>
        <taxon>Pentapetalae</taxon>
        <taxon>rosids</taxon>
        <taxon>malvids</taxon>
        <taxon>Brassicales</taxon>
        <taxon>Brassicaceae</taxon>
        <taxon>Camelineae</taxon>
        <taxon>Arabidopsis</taxon>
    </lineage>
</organism>
<feature type="chain" id="PRO_0000363500" description="Pentatricopeptide repeat-containing protein At5g03800">
    <location>
        <begin position="1"/>
        <end position="896"/>
    </location>
</feature>
<feature type="repeat" description="PPR 1">
    <location>
        <begin position="113"/>
        <end position="143"/>
    </location>
</feature>
<feature type="repeat" description="PPR 2">
    <location>
        <begin position="144"/>
        <end position="178"/>
    </location>
</feature>
<feature type="repeat" description="PPR 3">
    <location>
        <begin position="180"/>
        <end position="214"/>
    </location>
</feature>
<feature type="repeat" description="PPR 4">
    <location>
        <begin position="215"/>
        <end position="247"/>
    </location>
</feature>
<feature type="repeat" description="PPR 5">
    <location>
        <begin position="248"/>
        <end position="278"/>
    </location>
</feature>
<feature type="repeat" description="PPR 6">
    <location>
        <begin position="284"/>
        <end position="318"/>
    </location>
</feature>
<feature type="repeat" description="PPR 7">
    <location>
        <begin position="319"/>
        <end position="349"/>
    </location>
</feature>
<feature type="repeat" description="PPR 8">
    <location>
        <begin position="350"/>
        <end position="380"/>
    </location>
</feature>
<feature type="repeat" description="PPR 9">
    <location>
        <begin position="381"/>
        <end position="415"/>
    </location>
</feature>
<feature type="repeat" description="PPR 10">
    <location>
        <begin position="416"/>
        <end position="450"/>
    </location>
</feature>
<feature type="repeat" description="PPR 11">
    <location>
        <begin position="451"/>
        <end position="481"/>
    </location>
</feature>
<feature type="repeat" description="PPR 12">
    <location>
        <begin position="484"/>
        <end position="519"/>
    </location>
</feature>
<feature type="repeat" description="PPR 13">
    <location>
        <begin position="520"/>
        <end position="554"/>
    </location>
</feature>
<feature type="repeat" description="PPR 14">
    <location>
        <begin position="555"/>
        <end position="585"/>
    </location>
</feature>
<feature type="repeat" description="PPR 15">
    <location>
        <begin position="586"/>
        <end position="620"/>
    </location>
</feature>
<feature type="repeat" description="PPR 16">
    <location>
        <begin position="621"/>
        <end position="653"/>
    </location>
</feature>
<feature type="repeat" description="PPR 17">
    <location>
        <begin position="659"/>
        <end position="689"/>
    </location>
</feature>
<feature type="region of interest" description="Type E motif">
    <location>
        <begin position="694"/>
        <end position="769"/>
    </location>
</feature>
<feature type="region of interest" description="Type E(+) motif">
    <location>
        <begin position="770"/>
        <end position="800"/>
    </location>
</feature>
<feature type="region of interest" description="Type DYW motif">
    <location>
        <begin position="801"/>
        <end position="896"/>
    </location>
</feature>
<proteinExistence type="evidence at transcript level"/>
<evidence type="ECO:0000269" key="1">
    <source>
    </source>
</evidence>
<evidence type="ECO:0000305" key="2"/>
<gene>
    <name type="primary">EMB175</name>
    <name type="synonym">PCMP-H19</name>
    <name type="ordered locus">At5g03800</name>
    <name type="ORF">F8F6_10</name>
    <name type="ORF">MED24_10</name>
</gene>
<protein>
    <recommendedName>
        <fullName>Pentatricopeptide repeat-containing protein At5g03800</fullName>
    </recommendedName>
    <alternativeName>
        <fullName>Protein EMBRYO DEFECTIVE 175</fullName>
    </alternativeName>
</protein>
<dbReference type="EMBL" id="AY864345">
    <property type="protein sequence ID" value="AAW62960.1"/>
    <property type="molecule type" value="mRNA"/>
</dbReference>
<dbReference type="EMBL" id="AY864346">
    <property type="protein sequence ID" value="AAW62961.1"/>
    <property type="molecule type" value="Genomic_DNA"/>
</dbReference>
<dbReference type="EMBL" id="AB005235">
    <property type="protein sequence ID" value="BAB08606.1"/>
    <property type="molecule type" value="Genomic_DNA"/>
</dbReference>
<dbReference type="EMBL" id="AL162873">
    <property type="protein sequence ID" value="CAB85500.1"/>
    <property type="molecule type" value="Genomic_DNA"/>
</dbReference>
<dbReference type="EMBL" id="CP002688">
    <property type="protein sequence ID" value="AED90656.1"/>
    <property type="molecule type" value="Genomic_DNA"/>
</dbReference>
<dbReference type="EMBL" id="AK117204">
    <property type="protein sequence ID" value="BAC41880.1"/>
    <property type="molecule type" value="mRNA"/>
</dbReference>
<dbReference type="PIR" id="T48407">
    <property type="entry name" value="T48407"/>
</dbReference>
<dbReference type="RefSeq" id="NP_196000.2">
    <property type="nucleotide sequence ID" value="NM_120461.4"/>
</dbReference>
<dbReference type="SMR" id="Q9FFN1"/>
<dbReference type="FunCoup" id="Q9FFN1">
    <property type="interactions" value="956"/>
</dbReference>
<dbReference type="STRING" id="3702.Q9FFN1"/>
<dbReference type="PaxDb" id="3702-AT5G03800.1"/>
<dbReference type="ProteomicsDB" id="249253"/>
<dbReference type="EnsemblPlants" id="AT5G03800.1">
    <property type="protein sequence ID" value="AT5G03800.1"/>
    <property type="gene ID" value="AT5G03800"/>
</dbReference>
<dbReference type="GeneID" id="831717"/>
<dbReference type="Gramene" id="AT5G03800.1">
    <property type="protein sequence ID" value="AT5G03800.1"/>
    <property type="gene ID" value="AT5G03800"/>
</dbReference>
<dbReference type="KEGG" id="ath:AT5G03800"/>
<dbReference type="Araport" id="AT5G03800"/>
<dbReference type="TAIR" id="AT5G03800">
    <property type="gene designation" value="EMB175"/>
</dbReference>
<dbReference type="eggNOG" id="KOG4197">
    <property type="taxonomic scope" value="Eukaryota"/>
</dbReference>
<dbReference type="HOGENOM" id="CLU_002706_15_1_1"/>
<dbReference type="InParanoid" id="Q9FFN1"/>
<dbReference type="OMA" id="SFFARDK"/>
<dbReference type="PhylomeDB" id="Q9FFN1"/>
<dbReference type="PRO" id="PR:Q9FFN1"/>
<dbReference type="Proteomes" id="UP000006548">
    <property type="component" value="Chromosome 5"/>
</dbReference>
<dbReference type="ExpressionAtlas" id="Q9FFN1">
    <property type="expression patterns" value="baseline and differential"/>
</dbReference>
<dbReference type="GO" id="GO:0003723">
    <property type="term" value="F:RNA binding"/>
    <property type="evidence" value="ECO:0007669"/>
    <property type="project" value="InterPro"/>
</dbReference>
<dbReference type="GO" id="GO:0008270">
    <property type="term" value="F:zinc ion binding"/>
    <property type="evidence" value="ECO:0007669"/>
    <property type="project" value="InterPro"/>
</dbReference>
<dbReference type="GO" id="GO:0009793">
    <property type="term" value="P:embryo development ending in seed dormancy"/>
    <property type="evidence" value="ECO:0000315"/>
    <property type="project" value="TAIR"/>
</dbReference>
<dbReference type="GO" id="GO:0009451">
    <property type="term" value="P:RNA modification"/>
    <property type="evidence" value="ECO:0007669"/>
    <property type="project" value="InterPro"/>
</dbReference>
<dbReference type="FunFam" id="1.25.40.10:FF:000679">
    <property type="entry name" value="Pentatricopeptide repeat-containing protein At5g03800"/>
    <property type="match status" value="1"/>
</dbReference>
<dbReference type="FunFam" id="1.25.40.10:FF:000695">
    <property type="entry name" value="Pentatricopeptide repeat-containing protein At5g03800"/>
    <property type="match status" value="1"/>
</dbReference>
<dbReference type="FunFam" id="1.25.40.10:FF:000073">
    <property type="entry name" value="Pentatricopeptide repeat-containing protein chloroplastic"/>
    <property type="match status" value="1"/>
</dbReference>
<dbReference type="FunFam" id="1.25.40.10:FF:001564">
    <property type="entry name" value="Pentatricopeptide repeat-containing protein103"/>
    <property type="match status" value="1"/>
</dbReference>
<dbReference type="FunFam" id="1.25.40.10:FF:002102">
    <property type="entry name" value="Pentatricopeptide repeat-containing protein103"/>
    <property type="match status" value="1"/>
</dbReference>
<dbReference type="Gene3D" id="1.25.40.10">
    <property type="entry name" value="Tetratricopeptide repeat domain"/>
    <property type="match status" value="6"/>
</dbReference>
<dbReference type="InterPro" id="IPR032867">
    <property type="entry name" value="DYW_dom"/>
</dbReference>
<dbReference type="InterPro" id="IPR046848">
    <property type="entry name" value="E_motif"/>
</dbReference>
<dbReference type="InterPro" id="IPR002885">
    <property type="entry name" value="Pentatricopeptide_rpt"/>
</dbReference>
<dbReference type="InterPro" id="IPR046960">
    <property type="entry name" value="PPR_At4g14850-like_plant"/>
</dbReference>
<dbReference type="InterPro" id="IPR011990">
    <property type="entry name" value="TPR-like_helical_dom_sf"/>
</dbReference>
<dbReference type="NCBIfam" id="TIGR00756">
    <property type="entry name" value="PPR"/>
    <property type="match status" value="5"/>
</dbReference>
<dbReference type="PANTHER" id="PTHR47926">
    <property type="entry name" value="PENTATRICOPEPTIDE REPEAT-CONTAINING PROTEIN"/>
    <property type="match status" value="1"/>
</dbReference>
<dbReference type="PANTHER" id="PTHR47926:SF512">
    <property type="entry name" value="REPEAT (PPR) SUPERFAMILY PROTEIN, PUTATIVE-RELATED"/>
    <property type="match status" value="1"/>
</dbReference>
<dbReference type="Pfam" id="PF14432">
    <property type="entry name" value="DYW_deaminase"/>
    <property type="match status" value="1"/>
</dbReference>
<dbReference type="Pfam" id="PF20431">
    <property type="entry name" value="E_motif"/>
    <property type="match status" value="1"/>
</dbReference>
<dbReference type="Pfam" id="PF01535">
    <property type="entry name" value="PPR"/>
    <property type="match status" value="4"/>
</dbReference>
<dbReference type="Pfam" id="PF13041">
    <property type="entry name" value="PPR_2"/>
    <property type="match status" value="4"/>
</dbReference>
<dbReference type="PROSITE" id="PS51375">
    <property type="entry name" value="PPR"/>
    <property type="match status" value="16"/>
</dbReference>
<comment type="function">
    <text evidence="1">May play a role in embryogenesis.</text>
</comment>
<comment type="similarity">
    <text evidence="2">Belongs to the PPR family. PCMP-H subfamily.</text>
</comment>
<comment type="online information" name="Pentatricopeptide repeat proteins">
    <link uri="https://ppr.plantenergy.uwa.edu.au"/>
</comment>
<accession>Q9FFN1</accession>
<accession>Q9LZC7</accession>
<keyword id="KW-1185">Reference proteome</keyword>
<keyword id="KW-0677">Repeat</keyword>
<reference key="1">
    <citation type="journal article" date="2005" name="Planta">
        <title>Arabidopsis emb175 and other ppr knockout mutants reveal essential roles for pentatricopeptide repeat (PPR) proteins in plant embryogenesis.</title>
        <authorList>
            <person name="Cushing D.A."/>
            <person name="Forsthoefel N.R."/>
            <person name="Gestaut D.R."/>
            <person name="Vernon D.M."/>
        </authorList>
    </citation>
    <scope>NUCLEOTIDE SEQUENCE [GENOMIC DNA / MRNA]</scope>
    <scope>FUNCTION</scope>
</reference>
<reference key="2">
    <citation type="journal article" date="1997" name="DNA Res.">
        <title>Structural analysis of Arabidopsis thaliana chromosome 5. I. Sequence features of the 1.6 Mb regions covered by twenty physically assigned P1 clones.</title>
        <authorList>
            <person name="Sato S."/>
            <person name="Kotani H."/>
            <person name="Nakamura Y."/>
            <person name="Kaneko T."/>
            <person name="Asamizu E."/>
            <person name="Fukami M."/>
            <person name="Miyajima N."/>
            <person name="Tabata S."/>
        </authorList>
    </citation>
    <scope>NUCLEOTIDE SEQUENCE [LARGE SCALE GENOMIC DNA]</scope>
    <source>
        <strain>cv. Columbia</strain>
    </source>
</reference>
<reference key="3">
    <citation type="journal article" date="2000" name="Nature">
        <title>Sequence and analysis of chromosome 5 of the plant Arabidopsis thaliana.</title>
        <authorList>
            <person name="Tabata S."/>
            <person name="Kaneko T."/>
            <person name="Nakamura Y."/>
            <person name="Kotani H."/>
            <person name="Kato T."/>
            <person name="Asamizu E."/>
            <person name="Miyajima N."/>
            <person name="Sasamoto S."/>
            <person name="Kimura T."/>
            <person name="Hosouchi T."/>
            <person name="Kawashima K."/>
            <person name="Kohara M."/>
            <person name="Matsumoto M."/>
            <person name="Matsuno A."/>
            <person name="Muraki A."/>
            <person name="Nakayama S."/>
            <person name="Nakazaki N."/>
            <person name="Naruo K."/>
            <person name="Okumura S."/>
            <person name="Shinpo S."/>
            <person name="Takeuchi C."/>
            <person name="Wada T."/>
            <person name="Watanabe A."/>
            <person name="Yamada M."/>
            <person name="Yasuda M."/>
            <person name="Sato S."/>
            <person name="de la Bastide M."/>
            <person name="Huang E."/>
            <person name="Spiegel L."/>
            <person name="Gnoj L."/>
            <person name="O'Shaughnessy A."/>
            <person name="Preston R."/>
            <person name="Habermann K."/>
            <person name="Murray J."/>
            <person name="Johnson D."/>
            <person name="Rohlfing T."/>
            <person name="Nelson J."/>
            <person name="Stoneking T."/>
            <person name="Pepin K."/>
            <person name="Spieth J."/>
            <person name="Sekhon M."/>
            <person name="Armstrong J."/>
            <person name="Becker M."/>
            <person name="Belter E."/>
            <person name="Cordum H."/>
            <person name="Cordes M."/>
            <person name="Courtney L."/>
            <person name="Courtney W."/>
            <person name="Dante M."/>
            <person name="Du H."/>
            <person name="Edwards J."/>
            <person name="Fryman J."/>
            <person name="Haakensen B."/>
            <person name="Lamar E."/>
            <person name="Latreille P."/>
            <person name="Leonard S."/>
            <person name="Meyer R."/>
            <person name="Mulvaney E."/>
            <person name="Ozersky P."/>
            <person name="Riley A."/>
            <person name="Strowmatt C."/>
            <person name="Wagner-McPherson C."/>
            <person name="Wollam A."/>
            <person name="Yoakum M."/>
            <person name="Bell M."/>
            <person name="Dedhia N."/>
            <person name="Parnell L."/>
            <person name="Shah R."/>
            <person name="Rodriguez M."/>
            <person name="Hoon See L."/>
            <person name="Vil D."/>
            <person name="Baker J."/>
            <person name="Kirchoff K."/>
            <person name="Toth K."/>
            <person name="King L."/>
            <person name="Bahret A."/>
            <person name="Miller B."/>
            <person name="Marra M.A."/>
            <person name="Martienssen R."/>
            <person name="McCombie W.R."/>
            <person name="Wilson R.K."/>
            <person name="Murphy G."/>
            <person name="Bancroft I."/>
            <person name="Volckaert G."/>
            <person name="Wambutt R."/>
            <person name="Duesterhoeft A."/>
            <person name="Stiekema W."/>
            <person name="Pohl T."/>
            <person name="Entian K.-D."/>
            <person name="Terryn N."/>
            <person name="Hartley N."/>
            <person name="Bent E."/>
            <person name="Johnson S."/>
            <person name="Langham S.-A."/>
            <person name="McCullagh B."/>
            <person name="Robben J."/>
            <person name="Grymonprez B."/>
            <person name="Zimmermann W."/>
            <person name="Ramsperger U."/>
            <person name="Wedler H."/>
            <person name="Balke K."/>
            <person name="Wedler E."/>
            <person name="Peters S."/>
            <person name="van Staveren M."/>
            <person name="Dirkse W."/>
            <person name="Mooijman P."/>
            <person name="Klein Lankhorst R."/>
            <person name="Weitzenegger T."/>
            <person name="Bothe G."/>
            <person name="Rose M."/>
            <person name="Hauf J."/>
            <person name="Berneiser S."/>
            <person name="Hempel S."/>
            <person name="Feldpausch M."/>
            <person name="Lamberth S."/>
            <person name="Villarroel R."/>
            <person name="Gielen J."/>
            <person name="Ardiles W."/>
            <person name="Bents O."/>
            <person name="Lemcke K."/>
            <person name="Kolesov G."/>
            <person name="Mayer K.F.X."/>
            <person name="Rudd S."/>
            <person name="Schoof H."/>
            <person name="Schueller C."/>
            <person name="Zaccaria P."/>
            <person name="Mewes H.-W."/>
            <person name="Bevan M."/>
            <person name="Fransz P.F."/>
        </authorList>
    </citation>
    <scope>NUCLEOTIDE SEQUENCE [LARGE SCALE GENOMIC DNA] OF 1-837</scope>
    <source>
        <strain>cv. Columbia</strain>
    </source>
</reference>
<reference key="4">
    <citation type="journal article" date="2017" name="Plant J.">
        <title>Araport11: a complete reannotation of the Arabidopsis thaliana reference genome.</title>
        <authorList>
            <person name="Cheng C.Y."/>
            <person name="Krishnakumar V."/>
            <person name="Chan A.P."/>
            <person name="Thibaud-Nissen F."/>
            <person name="Schobel S."/>
            <person name="Town C.D."/>
        </authorList>
    </citation>
    <scope>GENOME REANNOTATION</scope>
    <source>
        <strain>cv. Columbia</strain>
    </source>
</reference>
<reference key="5">
    <citation type="journal article" date="2002" name="Science">
        <title>Functional annotation of a full-length Arabidopsis cDNA collection.</title>
        <authorList>
            <person name="Seki M."/>
            <person name="Narusaka M."/>
            <person name="Kamiya A."/>
            <person name="Ishida J."/>
            <person name="Satou M."/>
            <person name="Sakurai T."/>
            <person name="Nakajima M."/>
            <person name="Enju A."/>
            <person name="Akiyama K."/>
            <person name="Oono Y."/>
            <person name="Muramatsu M."/>
            <person name="Hayashizaki Y."/>
            <person name="Kawai J."/>
            <person name="Carninci P."/>
            <person name="Itoh M."/>
            <person name="Ishii Y."/>
            <person name="Arakawa T."/>
            <person name="Shibata K."/>
            <person name="Shinagawa A."/>
            <person name="Shinozaki K."/>
        </authorList>
    </citation>
    <scope>NUCLEOTIDE SEQUENCE [LARGE SCALE MRNA]</scope>
    <source>
        <strain>cv. Columbia</strain>
    </source>
</reference>
<reference key="6">
    <citation type="journal article" date="2000" name="Plant Mol. Biol.">
        <title>In Arabidopsis thaliana, 1% of the genome codes for a novel protein family unique to plants.</title>
        <authorList>
            <person name="Aubourg S."/>
            <person name="Boudet N."/>
            <person name="Kreis M."/>
            <person name="Lecharny A."/>
        </authorList>
    </citation>
    <scope>GENE FAMILY</scope>
</reference>
<reference key="7">
    <citation type="journal article" date="2004" name="Plant Cell">
        <title>Genome-wide analysis of Arabidopsis pentatricopeptide repeat proteins reveals their essential role in organelle biogenesis.</title>
        <authorList>
            <person name="Lurin C."/>
            <person name="Andres C."/>
            <person name="Aubourg S."/>
            <person name="Bellaoui M."/>
            <person name="Bitton F."/>
            <person name="Bruyere C."/>
            <person name="Caboche M."/>
            <person name="Debast C."/>
            <person name="Gualberto J."/>
            <person name="Hoffmann B."/>
            <person name="Lecharny A."/>
            <person name="Le Ret M."/>
            <person name="Martin-Magniette M.-L."/>
            <person name="Mireau H."/>
            <person name="Peeters N."/>
            <person name="Renou J.-P."/>
            <person name="Szurek B."/>
            <person name="Taconnat L."/>
            <person name="Small I."/>
        </authorList>
    </citation>
    <scope>GENE FAMILY</scope>
</reference>
<name>PP363_ARATH</name>